<proteinExistence type="inferred from homology"/>
<name>HIS8_ECOHS</name>
<feature type="chain" id="PRO_1000063474" description="Histidinol-phosphate aminotransferase">
    <location>
        <begin position="1"/>
        <end position="356"/>
    </location>
</feature>
<feature type="modified residue" description="N6-(pyridoxal phosphate)lysine" evidence="1">
    <location>
        <position position="214"/>
    </location>
</feature>
<comment type="catalytic activity">
    <reaction evidence="1">
        <text>L-histidinol phosphate + 2-oxoglutarate = 3-(imidazol-4-yl)-2-oxopropyl phosphate + L-glutamate</text>
        <dbReference type="Rhea" id="RHEA:23744"/>
        <dbReference type="ChEBI" id="CHEBI:16810"/>
        <dbReference type="ChEBI" id="CHEBI:29985"/>
        <dbReference type="ChEBI" id="CHEBI:57766"/>
        <dbReference type="ChEBI" id="CHEBI:57980"/>
        <dbReference type="EC" id="2.6.1.9"/>
    </reaction>
</comment>
<comment type="cofactor">
    <cofactor evidence="1">
        <name>pyridoxal 5'-phosphate</name>
        <dbReference type="ChEBI" id="CHEBI:597326"/>
    </cofactor>
</comment>
<comment type="pathway">
    <text evidence="1">Amino-acid biosynthesis; L-histidine biosynthesis; L-histidine from 5-phospho-alpha-D-ribose 1-diphosphate: step 7/9.</text>
</comment>
<comment type="subunit">
    <text evidence="1">Homodimer.</text>
</comment>
<comment type="similarity">
    <text evidence="1">Belongs to the class-II pyridoxal-phosphate-dependent aminotransferase family. Histidinol-phosphate aminotransferase subfamily.</text>
</comment>
<dbReference type="EC" id="2.6.1.9" evidence="1"/>
<dbReference type="EMBL" id="CP000802">
    <property type="protein sequence ID" value="ABV06449.1"/>
    <property type="molecule type" value="Genomic_DNA"/>
</dbReference>
<dbReference type="RefSeq" id="WP_000108945.1">
    <property type="nucleotide sequence ID" value="NC_009800.1"/>
</dbReference>
<dbReference type="SMR" id="A8A1P5"/>
<dbReference type="KEGG" id="ecx:EcHS_A2160"/>
<dbReference type="HOGENOM" id="CLU_017584_3_1_6"/>
<dbReference type="UniPathway" id="UPA00031">
    <property type="reaction ID" value="UER00012"/>
</dbReference>
<dbReference type="GO" id="GO:0004400">
    <property type="term" value="F:histidinol-phosphate transaminase activity"/>
    <property type="evidence" value="ECO:0007669"/>
    <property type="project" value="UniProtKB-UniRule"/>
</dbReference>
<dbReference type="GO" id="GO:0030170">
    <property type="term" value="F:pyridoxal phosphate binding"/>
    <property type="evidence" value="ECO:0007669"/>
    <property type="project" value="InterPro"/>
</dbReference>
<dbReference type="GO" id="GO:0000105">
    <property type="term" value="P:L-histidine biosynthetic process"/>
    <property type="evidence" value="ECO:0007669"/>
    <property type="project" value="UniProtKB-UniRule"/>
</dbReference>
<dbReference type="CDD" id="cd00609">
    <property type="entry name" value="AAT_like"/>
    <property type="match status" value="1"/>
</dbReference>
<dbReference type="FunFam" id="3.40.640.10:FF:000032">
    <property type="entry name" value="Histidinol-phosphate aminotransferase"/>
    <property type="match status" value="1"/>
</dbReference>
<dbReference type="FunFam" id="3.90.1150.10:FF:000042">
    <property type="entry name" value="Histidinol-phosphate aminotransferase"/>
    <property type="match status" value="1"/>
</dbReference>
<dbReference type="Gene3D" id="3.90.1150.10">
    <property type="entry name" value="Aspartate Aminotransferase, domain 1"/>
    <property type="match status" value="1"/>
</dbReference>
<dbReference type="Gene3D" id="3.40.640.10">
    <property type="entry name" value="Type I PLP-dependent aspartate aminotransferase-like (Major domain)"/>
    <property type="match status" value="1"/>
</dbReference>
<dbReference type="HAMAP" id="MF_01023">
    <property type="entry name" value="HisC_aminotrans_2"/>
    <property type="match status" value="1"/>
</dbReference>
<dbReference type="InterPro" id="IPR001917">
    <property type="entry name" value="Aminotrans_II_pyridoxalP_BS"/>
</dbReference>
<dbReference type="InterPro" id="IPR004839">
    <property type="entry name" value="Aminotransferase_I/II_large"/>
</dbReference>
<dbReference type="InterPro" id="IPR005861">
    <property type="entry name" value="HisP_aminotrans"/>
</dbReference>
<dbReference type="InterPro" id="IPR015424">
    <property type="entry name" value="PyrdxlP-dep_Trfase"/>
</dbReference>
<dbReference type="InterPro" id="IPR015421">
    <property type="entry name" value="PyrdxlP-dep_Trfase_major"/>
</dbReference>
<dbReference type="InterPro" id="IPR015422">
    <property type="entry name" value="PyrdxlP-dep_Trfase_small"/>
</dbReference>
<dbReference type="NCBIfam" id="TIGR01141">
    <property type="entry name" value="hisC"/>
    <property type="match status" value="1"/>
</dbReference>
<dbReference type="PANTHER" id="PTHR42885:SF2">
    <property type="entry name" value="HISTIDINOL-PHOSPHATE AMINOTRANSFERASE"/>
    <property type="match status" value="1"/>
</dbReference>
<dbReference type="PANTHER" id="PTHR42885">
    <property type="entry name" value="HISTIDINOL-PHOSPHATE AMINOTRANSFERASE-RELATED"/>
    <property type="match status" value="1"/>
</dbReference>
<dbReference type="Pfam" id="PF00155">
    <property type="entry name" value="Aminotran_1_2"/>
    <property type="match status" value="1"/>
</dbReference>
<dbReference type="SUPFAM" id="SSF53383">
    <property type="entry name" value="PLP-dependent transferases"/>
    <property type="match status" value="1"/>
</dbReference>
<dbReference type="PROSITE" id="PS00599">
    <property type="entry name" value="AA_TRANSFER_CLASS_2"/>
    <property type="match status" value="1"/>
</dbReference>
<keyword id="KW-0028">Amino-acid biosynthesis</keyword>
<keyword id="KW-0032">Aminotransferase</keyword>
<keyword id="KW-0368">Histidine biosynthesis</keyword>
<keyword id="KW-0663">Pyridoxal phosphate</keyword>
<keyword id="KW-0808">Transferase</keyword>
<evidence type="ECO:0000255" key="1">
    <source>
        <dbReference type="HAMAP-Rule" id="MF_01023"/>
    </source>
</evidence>
<protein>
    <recommendedName>
        <fullName evidence="1">Histidinol-phosphate aminotransferase</fullName>
        <ecNumber evidence="1">2.6.1.9</ecNumber>
    </recommendedName>
    <alternativeName>
        <fullName evidence="1">Imidazole acetol-phosphate transaminase</fullName>
    </alternativeName>
</protein>
<reference key="1">
    <citation type="journal article" date="2008" name="J. Bacteriol.">
        <title>The pangenome structure of Escherichia coli: comparative genomic analysis of E. coli commensal and pathogenic isolates.</title>
        <authorList>
            <person name="Rasko D.A."/>
            <person name="Rosovitz M.J."/>
            <person name="Myers G.S.A."/>
            <person name="Mongodin E.F."/>
            <person name="Fricke W.F."/>
            <person name="Gajer P."/>
            <person name="Crabtree J."/>
            <person name="Sebaihia M."/>
            <person name="Thomson N.R."/>
            <person name="Chaudhuri R."/>
            <person name="Henderson I.R."/>
            <person name="Sperandio V."/>
            <person name="Ravel J."/>
        </authorList>
    </citation>
    <scope>NUCLEOTIDE SEQUENCE [LARGE SCALE GENOMIC DNA]</scope>
    <source>
        <strain>HS</strain>
    </source>
</reference>
<organism>
    <name type="scientific">Escherichia coli O9:H4 (strain HS)</name>
    <dbReference type="NCBI Taxonomy" id="331112"/>
    <lineage>
        <taxon>Bacteria</taxon>
        <taxon>Pseudomonadati</taxon>
        <taxon>Pseudomonadota</taxon>
        <taxon>Gammaproteobacteria</taxon>
        <taxon>Enterobacterales</taxon>
        <taxon>Enterobacteriaceae</taxon>
        <taxon>Escherichia</taxon>
    </lineage>
</organism>
<sequence length="356" mass="39349">MSTVTITDLARENVRNLTPYQSARRLGGNGDVWLNANEYPTAVEFQLTQQTLNRYPECQPKAVIENYAQYAGVKPEQVLVSRGADEGIELLIRAFCEPGKDAILYCPPTYGMYSVSAETIGVECRTVPTLDNWQLDLQGISDKLDGVKVVYVCSPNNPTGQLINPQDFRTLLELTRGKAIVVADEAYIEFCPQASLAGWLAEYPHLAILRTLSKAFALAGLRCGFTLANEEVINLLMKVIAPYPLSTPVADIAAQALSPQGIVAMRERVAQIIAEREYLIAALKKISCVEQVFDSETNYILARFKASSAVFKSLWDQGIILRDQNKQPSLSGCLRITVGTREESQRVIDALRAEQV</sequence>
<accession>A8A1P5</accession>
<gene>
    <name evidence="1" type="primary">hisC</name>
    <name type="ordered locus">EcHS_A2160</name>
</gene>